<proteinExistence type="inferred from homology"/>
<keyword id="KW-0007">Acetylation</keyword>
<keyword id="KW-0175">Coiled coil</keyword>
<keyword id="KW-0472">Membrane</keyword>
<keyword id="KW-0496">Mitochondrion</keyword>
<keyword id="KW-0999">Mitochondrion inner membrane</keyword>
<keyword id="KW-1185">Reference proteome</keyword>
<keyword id="KW-0812">Transmembrane</keyword>
<keyword id="KW-1133">Transmembrane helix</keyword>
<protein>
    <recommendedName>
        <fullName>Cytochrome c oxidase assembly factor 3 homolog, mitochondrial</fullName>
    </recommendedName>
    <alternativeName>
        <fullName>Coiled-coil domain-containing protein 56</fullName>
    </alternativeName>
</protein>
<accession>Q5R7J0</accession>
<reference key="1">
    <citation type="submission" date="2004-11" db="EMBL/GenBank/DDBJ databases">
        <authorList>
            <consortium name="The German cDNA consortium"/>
        </authorList>
    </citation>
    <scope>NUCLEOTIDE SEQUENCE [LARGE SCALE MRNA]</scope>
    <source>
        <tissue>Liver</tissue>
    </source>
</reference>
<gene>
    <name type="primary">COA3</name>
    <name type="synonym">CCDC56</name>
</gene>
<evidence type="ECO:0000250" key="1"/>
<evidence type="ECO:0000250" key="2">
    <source>
        <dbReference type="UniProtKB" id="Q9Y2R0"/>
    </source>
</evidence>
<evidence type="ECO:0000255" key="3"/>
<evidence type="ECO:0000256" key="4">
    <source>
        <dbReference type="SAM" id="MobiDB-lite"/>
    </source>
</evidence>
<evidence type="ECO:0000305" key="5"/>
<feature type="initiator methionine" description="Removed" evidence="2">
    <location>
        <position position="1"/>
    </location>
</feature>
<feature type="chain" id="PRO_0000239440" description="Cytochrome c oxidase assembly factor 3 homolog, mitochondrial">
    <location>
        <begin position="2"/>
        <end position="106"/>
    </location>
</feature>
<feature type="topological domain" description="Mitochondrial matrix" evidence="3">
    <location>
        <begin position="2"/>
        <end position="57"/>
    </location>
</feature>
<feature type="transmembrane region" description="Helical" evidence="3">
    <location>
        <begin position="58"/>
        <end position="80"/>
    </location>
</feature>
<feature type="topological domain" description="Mitochondrial intermembrane" evidence="3">
    <location>
        <begin position="81"/>
        <end position="106"/>
    </location>
</feature>
<feature type="region of interest" description="Disordered" evidence="4">
    <location>
        <begin position="1"/>
        <end position="28"/>
    </location>
</feature>
<feature type="coiled-coil region" evidence="3">
    <location>
        <begin position="78"/>
        <end position="104"/>
    </location>
</feature>
<feature type="modified residue" description="N-acetylalanine" evidence="2">
    <location>
        <position position="2"/>
    </location>
</feature>
<name>COA3_PONAB</name>
<organism>
    <name type="scientific">Pongo abelii</name>
    <name type="common">Sumatran orangutan</name>
    <name type="synonym">Pongo pygmaeus abelii</name>
    <dbReference type="NCBI Taxonomy" id="9601"/>
    <lineage>
        <taxon>Eukaryota</taxon>
        <taxon>Metazoa</taxon>
        <taxon>Chordata</taxon>
        <taxon>Craniata</taxon>
        <taxon>Vertebrata</taxon>
        <taxon>Euteleostomi</taxon>
        <taxon>Mammalia</taxon>
        <taxon>Eutheria</taxon>
        <taxon>Euarchontoglires</taxon>
        <taxon>Primates</taxon>
        <taxon>Haplorrhini</taxon>
        <taxon>Catarrhini</taxon>
        <taxon>Hominidae</taxon>
        <taxon>Pongo</taxon>
    </lineage>
</organism>
<comment type="function">
    <text evidence="2">Core component of the MITRAC (mitochondrial translation regulation assembly intermediate of cytochrome c oxidase complex) complex, that regulates cytochrome c oxidase assembly. MITRAC complexes regulate both translation of mitochondrial encoded components and assembly of nuclear-encoded components imported in mitochondrion. Required for efficient translation of MT-CO1 and mitochondrial respiratory chain complex IV assembly.</text>
</comment>
<comment type="subunit">
    <text evidence="2">Along with COX14, core component of the MITRAC (mitochondrial translation regulation assembly intermediate of cytochrome c oxidase complex) complex. Interacts with MT-CO1/COX1, SMIM20, SURF1 and TIMM21.</text>
</comment>
<comment type="subcellular location">
    <subcellularLocation>
        <location evidence="1">Mitochondrion inner membrane</location>
        <topology evidence="1">Single-pass membrane protein</topology>
    </subcellularLocation>
</comment>
<comment type="similarity">
    <text evidence="5">Belongs to the COA3 family.</text>
</comment>
<sequence length="106" mass="11780">MASSGSGDPLDSKRGEAPFAQRIDPTREKLTPEQLHFMRQAQLAQWQKVLPRRRTRNIVTGLGIGALVLAIHGYTFYSISQERFLDELEDEAKAARARALARASGS</sequence>
<dbReference type="EMBL" id="CR860126">
    <property type="protein sequence ID" value="CAH92270.1"/>
    <property type="molecule type" value="mRNA"/>
</dbReference>
<dbReference type="RefSeq" id="NP_001126326.1">
    <property type="nucleotide sequence ID" value="NM_001132854.2"/>
</dbReference>
<dbReference type="FunCoup" id="Q5R7J0">
    <property type="interactions" value="542"/>
</dbReference>
<dbReference type="STRING" id="9601.ENSPPYP00000009417"/>
<dbReference type="GeneID" id="100173307"/>
<dbReference type="KEGG" id="pon:100173307"/>
<dbReference type="CTD" id="28958"/>
<dbReference type="eggNOG" id="KOG4782">
    <property type="taxonomic scope" value="Eukaryota"/>
</dbReference>
<dbReference type="InParanoid" id="Q5R7J0"/>
<dbReference type="OrthoDB" id="10018333at2759"/>
<dbReference type="Proteomes" id="UP000001595">
    <property type="component" value="Unplaced"/>
</dbReference>
<dbReference type="GO" id="GO:0005743">
    <property type="term" value="C:mitochondrial inner membrane"/>
    <property type="evidence" value="ECO:0000250"/>
    <property type="project" value="UniProtKB"/>
</dbReference>
<dbReference type="GO" id="GO:0033617">
    <property type="term" value="P:mitochondrial cytochrome c oxidase assembly"/>
    <property type="evidence" value="ECO:0000250"/>
    <property type="project" value="UniProtKB"/>
</dbReference>
<dbReference type="GO" id="GO:0070131">
    <property type="term" value="P:positive regulation of mitochondrial translation"/>
    <property type="evidence" value="ECO:0000250"/>
    <property type="project" value="UniProtKB"/>
</dbReference>
<dbReference type="InterPro" id="IPR041752">
    <property type="entry name" value="Coa3"/>
</dbReference>
<dbReference type="InterPro" id="IPR018628">
    <property type="entry name" value="Coa3_cc"/>
</dbReference>
<dbReference type="PANTHER" id="PTHR15642:SF3">
    <property type="entry name" value="CYTOCHROME C OXIDASE ASSEMBLY FACTOR 3 HOMOLOG, MITOCHONDRIAL"/>
    <property type="match status" value="1"/>
</dbReference>
<dbReference type="PANTHER" id="PTHR15642">
    <property type="entry name" value="CYTOCHROME C OXIDASE ASSEMBLY FACTOR 3, MITOCHONDRIAL"/>
    <property type="match status" value="1"/>
</dbReference>
<dbReference type="Pfam" id="PF09813">
    <property type="entry name" value="Coa3_cc"/>
    <property type="match status" value="1"/>
</dbReference>